<reference key="1">
    <citation type="submission" date="2007-04" db="EMBL/GenBank/DDBJ databases">
        <title>Complete sequence of Shewanella putrefaciens CN-32.</title>
        <authorList>
            <consortium name="US DOE Joint Genome Institute"/>
            <person name="Copeland A."/>
            <person name="Lucas S."/>
            <person name="Lapidus A."/>
            <person name="Barry K."/>
            <person name="Detter J.C."/>
            <person name="Glavina del Rio T."/>
            <person name="Hammon N."/>
            <person name="Israni S."/>
            <person name="Dalin E."/>
            <person name="Tice H."/>
            <person name="Pitluck S."/>
            <person name="Chain P."/>
            <person name="Malfatti S."/>
            <person name="Shin M."/>
            <person name="Vergez L."/>
            <person name="Schmutz J."/>
            <person name="Larimer F."/>
            <person name="Land M."/>
            <person name="Hauser L."/>
            <person name="Kyrpides N."/>
            <person name="Mikhailova N."/>
            <person name="Romine M.F."/>
            <person name="Fredrickson J."/>
            <person name="Tiedje J."/>
            <person name="Richardson P."/>
        </authorList>
    </citation>
    <scope>NUCLEOTIDE SEQUENCE [LARGE SCALE GENOMIC DNA]</scope>
    <source>
        <strain>CN-32 / ATCC BAA-453</strain>
    </source>
</reference>
<feature type="chain" id="PRO_1000082865" description="ATP-dependent RNA helicase RhlB">
    <location>
        <begin position="1"/>
        <end position="439"/>
    </location>
</feature>
<feature type="domain" description="Helicase ATP-binding" evidence="1">
    <location>
        <begin position="40"/>
        <end position="219"/>
    </location>
</feature>
<feature type="domain" description="Helicase C-terminal" evidence="1">
    <location>
        <begin position="243"/>
        <end position="390"/>
    </location>
</feature>
<feature type="region of interest" description="Disordered" evidence="2">
    <location>
        <begin position="398"/>
        <end position="439"/>
    </location>
</feature>
<feature type="short sequence motif" description="Q motif">
    <location>
        <begin position="9"/>
        <end position="37"/>
    </location>
</feature>
<feature type="short sequence motif" description="DEAD box">
    <location>
        <begin position="165"/>
        <end position="168"/>
    </location>
</feature>
<feature type="compositionally biased region" description="Basic residues" evidence="2">
    <location>
        <begin position="425"/>
        <end position="439"/>
    </location>
</feature>
<feature type="binding site" evidence="1">
    <location>
        <begin position="53"/>
        <end position="60"/>
    </location>
    <ligand>
        <name>ATP</name>
        <dbReference type="ChEBI" id="CHEBI:30616"/>
    </ligand>
</feature>
<accession>A4YB09</accession>
<keyword id="KW-0067">ATP-binding</keyword>
<keyword id="KW-0963">Cytoplasm</keyword>
<keyword id="KW-0347">Helicase</keyword>
<keyword id="KW-0378">Hydrolase</keyword>
<keyword id="KW-0547">Nucleotide-binding</keyword>
<keyword id="KW-0694">RNA-binding</keyword>
<proteinExistence type="inferred from homology"/>
<protein>
    <recommendedName>
        <fullName evidence="1">ATP-dependent RNA helicase RhlB</fullName>
        <ecNumber evidence="1">3.6.4.13</ecNumber>
    </recommendedName>
</protein>
<name>RHLB_SHEPC</name>
<organism>
    <name type="scientific">Shewanella putrefaciens (strain CN-32 / ATCC BAA-453)</name>
    <dbReference type="NCBI Taxonomy" id="319224"/>
    <lineage>
        <taxon>Bacteria</taxon>
        <taxon>Pseudomonadati</taxon>
        <taxon>Pseudomonadota</taxon>
        <taxon>Gammaproteobacteria</taxon>
        <taxon>Alteromonadales</taxon>
        <taxon>Shewanellaceae</taxon>
        <taxon>Shewanella</taxon>
    </lineage>
</organism>
<gene>
    <name evidence="1" type="primary">rhlB</name>
    <name type="ordered locus">Sputcn32_3432</name>
</gene>
<sequence length="439" mass="49052">MSETHLSTQKFADLPLHPEVKQALAENGFEFCTPIQALSLPVLLQSKDIAGQAQTGTGKTMAFLVATFNHLLSTPIPEGRQINQPRAIIMAPTRELAIQIAKDAILLAKHTRLKVGIVYGGESYDVQRKVLDQGVDILIGTTGRIIDYVRQGIISLTAIQAVVLDEADRMFDLGFIKDIRFLFRRMPDANQRLNMLFSATLSMKVQELAYDHMNDPVKVDIAPDEKTSKNIKEEVFYPSQEDKMRLLLTLIEEDWPEKAIVFSNTKHSCENLWSWLEGDGHRVGLLTGDVPQKKRIRILEQFTSGQLDILVATDVAARGLHISDVSHVYNYDLPDDCEDYVHRIGRTGRAGNKGVSISFACEEYALNLPAIESYINHSIPVSNYDSSALLEDIPAPVKIPRKHPAGTRNLRERAGAGRPQGAHRSGGRPPRHDRTRRHS</sequence>
<dbReference type="EC" id="3.6.4.13" evidence="1"/>
<dbReference type="EMBL" id="CP000681">
    <property type="protein sequence ID" value="ABP77142.1"/>
    <property type="molecule type" value="Genomic_DNA"/>
</dbReference>
<dbReference type="SMR" id="A4YB09"/>
<dbReference type="STRING" id="319224.Sputcn32_3432"/>
<dbReference type="KEGG" id="spc:Sputcn32_3432"/>
<dbReference type="eggNOG" id="COG0513">
    <property type="taxonomic scope" value="Bacteria"/>
</dbReference>
<dbReference type="HOGENOM" id="CLU_003041_1_3_6"/>
<dbReference type="GO" id="GO:0005829">
    <property type="term" value="C:cytosol"/>
    <property type="evidence" value="ECO:0007669"/>
    <property type="project" value="TreeGrafter"/>
</dbReference>
<dbReference type="GO" id="GO:0005524">
    <property type="term" value="F:ATP binding"/>
    <property type="evidence" value="ECO:0007669"/>
    <property type="project" value="UniProtKB-UniRule"/>
</dbReference>
<dbReference type="GO" id="GO:0016887">
    <property type="term" value="F:ATP hydrolysis activity"/>
    <property type="evidence" value="ECO:0007669"/>
    <property type="project" value="RHEA"/>
</dbReference>
<dbReference type="GO" id="GO:0003723">
    <property type="term" value="F:RNA binding"/>
    <property type="evidence" value="ECO:0007669"/>
    <property type="project" value="UniProtKB-UniRule"/>
</dbReference>
<dbReference type="GO" id="GO:0003724">
    <property type="term" value="F:RNA helicase activity"/>
    <property type="evidence" value="ECO:0007669"/>
    <property type="project" value="UniProtKB-UniRule"/>
</dbReference>
<dbReference type="GO" id="GO:0006401">
    <property type="term" value="P:RNA catabolic process"/>
    <property type="evidence" value="ECO:0007669"/>
    <property type="project" value="UniProtKB-UniRule"/>
</dbReference>
<dbReference type="CDD" id="cd00268">
    <property type="entry name" value="DEADc"/>
    <property type="match status" value="1"/>
</dbReference>
<dbReference type="CDD" id="cd18787">
    <property type="entry name" value="SF2_C_DEAD"/>
    <property type="match status" value="1"/>
</dbReference>
<dbReference type="FunFam" id="3.40.50.300:FF:000008">
    <property type="entry name" value="ATP-dependent RNA helicase RhlB"/>
    <property type="match status" value="1"/>
</dbReference>
<dbReference type="FunFam" id="3.40.50.300:FF:000312">
    <property type="entry name" value="ATP-dependent RNA helicase RhlB"/>
    <property type="match status" value="1"/>
</dbReference>
<dbReference type="Gene3D" id="3.40.50.300">
    <property type="entry name" value="P-loop containing nucleotide triphosphate hydrolases"/>
    <property type="match status" value="2"/>
</dbReference>
<dbReference type="HAMAP" id="MF_00661">
    <property type="entry name" value="DEAD_helicase_RhlB"/>
    <property type="match status" value="1"/>
</dbReference>
<dbReference type="InterPro" id="IPR011545">
    <property type="entry name" value="DEAD/DEAH_box_helicase_dom"/>
</dbReference>
<dbReference type="InterPro" id="IPR050079">
    <property type="entry name" value="DEAD_box_RNA_helicase"/>
</dbReference>
<dbReference type="InterPro" id="IPR014001">
    <property type="entry name" value="Helicase_ATP-bd"/>
</dbReference>
<dbReference type="InterPro" id="IPR001650">
    <property type="entry name" value="Helicase_C-like"/>
</dbReference>
<dbReference type="InterPro" id="IPR027417">
    <property type="entry name" value="P-loop_NTPase"/>
</dbReference>
<dbReference type="InterPro" id="IPR000629">
    <property type="entry name" value="RNA-helicase_DEAD-box_CS"/>
</dbReference>
<dbReference type="InterPro" id="IPR023554">
    <property type="entry name" value="RNA_helicase_ATP-dep_RhlB"/>
</dbReference>
<dbReference type="InterPro" id="IPR014014">
    <property type="entry name" value="RNA_helicase_DEAD_Q_motif"/>
</dbReference>
<dbReference type="NCBIfam" id="NF003419">
    <property type="entry name" value="PRK04837.1"/>
    <property type="match status" value="1"/>
</dbReference>
<dbReference type="PANTHER" id="PTHR47959:SF10">
    <property type="entry name" value="ATP-DEPENDENT RNA HELICASE RHLB"/>
    <property type="match status" value="1"/>
</dbReference>
<dbReference type="PANTHER" id="PTHR47959">
    <property type="entry name" value="ATP-DEPENDENT RNA HELICASE RHLE-RELATED"/>
    <property type="match status" value="1"/>
</dbReference>
<dbReference type="Pfam" id="PF00270">
    <property type="entry name" value="DEAD"/>
    <property type="match status" value="1"/>
</dbReference>
<dbReference type="Pfam" id="PF00271">
    <property type="entry name" value="Helicase_C"/>
    <property type="match status" value="1"/>
</dbReference>
<dbReference type="SMART" id="SM00487">
    <property type="entry name" value="DEXDc"/>
    <property type="match status" value="1"/>
</dbReference>
<dbReference type="SMART" id="SM00490">
    <property type="entry name" value="HELICc"/>
    <property type="match status" value="1"/>
</dbReference>
<dbReference type="SUPFAM" id="SSF52540">
    <property type="entry name" value="P-loop containing nucleoside triphosphate hydrolases"/>
    <property type="match status" value="1"/>
</dbReference>
<dbReference type="PROSITE" id="PS00039">
    <property type="entry name" value="DEAD_ATP_HELICASE"/>
    <property type="match status" value="1"/>
</dbReference>
<dbReference type="PROSITE" id="PS51192">
    <property type="entry name" value="HELICASE_ATP_BIND_1"/>
    <property type="match status" value="1"/>
</dbReference>
<dbReference type="PROSITE" id="PS51194">
    <property type="entry name" value="HELICASE_CTER"/>
    <property type="match status" value="1"/>
</dbReference>
<dbReference type="PROSITE" id="PS51195">
    <property type="entry name" value="Q_MOTIF"/>
    <property type="match status" value="1"/>
</dbReference>
<evidence type="ECO:0000255" key="1">
    <source>
        <dbReference type="HAMAP-Rule" id="MF_00661"/>
    </source>
</evidence>
<evidence type="ECO:0000256" key="2">
    <source>
        <dbReference type="SAM" id="MobiDB-lite"/>
    </source>
</evidence>
<comment type="function">
    <text evidence="1">DEAD-box RNA helicase involved in RNA degradation. Has RNA-dependent ATPase activity and unwinds double-stranded RNA.</text>
</comment>
<comment type="catalytic activity">
    <reaction evidence="1">
        <text>ATP + H2O = ADP + phosphate + H(+)</text>
        <dbReference type="Rhea" id="RHEA:13065"/>
        <dbReference type="ChEBI" id="CHEBI:15377"/>
        <dbReference type="ChEBI" id="CHEBI:15378"/>
        <dbReference type="ChEBI" id="CHEBI:30616"/>
        <dbReference type="ChEBI" id="CHEBI:43474"/>
        <dbReference type="ChEBI" id="CHEBI:456216"/>
        <dbReference type="EC" id="3.6.4.13"/>
    </reaction>
</comment>
<comment type="subunit">
    <text evidence="1">Component of the RNA degradosome, which is a multiprotein complex involved in RNA processing and mRNA degradation.</text>
</comment>
<comment type="subcellular location">
    <subcellularLocation>
        <location evidence="1">Cytoplasm</location>
    </subcellularLocation>
</comment>
<comment type="similarity">
    <text evidence="1">Belongs to the DEAD box helicase family. RhlB subfamily.</text>
</comment>